<evidence type="ECO:0000250" key="1"/>
<evidence type="ECO:0000250" key="2">
    <source>
        <dbReference type="UniProtKB" id="P32571"/>
    </source>
</evidence>
<evidence type="ECO:0000255" key="3">
    <source>
        <dbReference type="PROSITE-ProRule" id="PRU00173"/>
    </source>
</evidence>
<evidence type="ECO:0000255" key="4">
    <source>
        <dbReference type="PROSITE-ProRule" id="PRU10092"/>
    </source>
</evidence>
<evidence type="ECO:0000255" key="5">
    <source>
        <dbReference type="PROSITE-ProRule" id="PRU10093"/>
    </source>
</evidence>
<evidence type="ECO:0000305" key="6"/>
<organism>
    <name type="scientific">Saccharomyces cerevisiae (strain YJM789)</name>
    <name type="common">Baker's yeast</name>
    <dbReference type="NCBI Taxonomy" id="307796"/>
    <lineage>
        <taxon>Eukaryota</taxon>
        <taxon>Fungi</taxon>
        <taxon>Dikarya</taxon>
        <taxon>Ascomycota</taxon>
        <taxon>Saccharomycotina</taxon>
        <taxon>Saccharomycetes</taxon>
        <taxon>Saccharomycetales</taxon>
        <taxon>Saccharomycetaceae</taxon>
        <taxon>Saccharomyces</taxon>
    </lineage>
</organism>
<name>UBP4_YEAS7</name>
<dbReference type="EC" id="3.4.19.12"/>
<dbReference type="EMBL" id="AAFW02000145">
    <property type="protein sequence ID" value="EDN60414.1"/>
    <property type="molecule type" value="Genomic_DNA"/>
</dbReference>
<dbReference type="SMR" id="A6ZY34"/>
<dbReference type="HOGENOM" id="CLU_005922_1_0_1"/>
<dbReference type="OrthoDB" id="13727at4893"/>
<dbReference type="Proteomes" id="UP000007060">
    <property type="component" value="Unassembled WGS sequence"/>
</dbReference>
<dbReference type="GO" id="GO:0031902">
    <property type="term" value="C:late endosome membrane"/>
    <property type="evidence" value="ECO:0007669"/>
    <property type="project" value="UniProtKB-SubCell"/>
</dbReference>
<dbReference type="GO" id="GO:0004843">
    <property type="term" value="F:cysteine-type deubiquitinase activity"/>
    <property type="evidence" value="ECO:0007669"/>
    <property type="project" value="UniProtKB-EC"/>
</dbReference>
<dbReference type="GO" id="GO:0016579">
    <property type="term" value="P:protein deubiquitination"/>
    <property type="evidence" value="ECO:0007669"/>
    <property type="project" value="InterPro"/>
</dbReference>
<dbReference type="GO" id="GO:0006508">
    <property type="term" value="P:proteolysis"/>
    <property type="evidence" value="ECO:0007669"/>
    <property type="project" value="UniProtKB-KW"/>
</dbReference>
<dbReference type="CDD" id="cd02674">
    <property type="entry name" value="Peptidase_C19R"/>
    <property type="match status" value="1"/>
</dbReference>
<dbReference type="FunFam" id="3.90.70.10:FF:000115">
    <property type="entry name" value="DOA4p Ubiquitin hydrolase"/>
    <property type="match status" value="1"/>
</dbReference>
<dbReference type="Gene3D" id="3.90.70.10">
    <property type="entry name" value="Cysteine proteinases"/>
    <property type="match status" value="1"/>
</dbReference>
<dbReference type="Gene3D" id="3.40.250.10">
    <property type="entry name" value="Rhodanese-like domain"/>
    <property type="match status" value="1"/>
</dbReference>
<dbReference type="InterPro" id="IPR038765">
    <property type="entry name" value="Papain-like_cys_pep_sf"/>
</dbReference>
<dbReference type="InterPro" id="IPR001394">
    <property type="entry name" value="Peptidase_C19_UCH"/>
</dbReference>
<dbReference type="InterPro" id="IPR001763">
    <property type="entry name" value="Rhodanese-like_dom"/>
</dbReference>
<dbReference type="InterPro" id="IPR036873">
    <property type="entry name" value="Rhodanese-like_dom_sf"/>
</dbReference>
<dbReference type="InterPro" id="IPR050185">
    <property type="entry name" value="Ub_carboxyl-term_hydrolase"/>
</dbReference>
<dbReference type="InterPro" id="IPR018200">
    <property type="entry name" value="USP_CS"/>
</dbReference>
<dbReference type="InterPro" id="IPR028889">
    <property type="entry name" value="USP_dom"/>
</dbReference>
<dbReference type="PANTHER" id="PTHR21646">
    <property type="entry name" value="UBIQUITIN CARBOXYL-TERMINAL HYDROLASE"/>
    <property type="match status" value="1"/>
</dbReference>
<dbReference type="PANTHER" id="PTHR21646:SF95">
    <property type="entry name" value="UBIQUITIN CARBOXYL-TERMINAL HYDROLASE 4-RELATED"/>
    <property type="match status" value="1"/>
</dbReference>
<dbReference type="Pfam" id="PF00581">
    <property type="entry name" value="Rhodanese"/>
    <property type="match status" value="1"/>
</dbReference>
<dbReference type="Pfam" id="PF00443">
    <property type="entry name" value="UCH"/>
    <property type="match status" value="1"/>
</dbReference>
<dbReference type="SMART" id="SM00450">
    <property type="entry name" value="RHOD"/>
    <property type="match status" value="1"/>
</dbReference>
<dbReference type="SUPFAM" id="SSF54001">
    <property type="entry name" value="Cysteine proteinases"/>
    <property type="match status" value="1"/>
</dbReference>
<dbReference type="SUPFAM" id="SSF52821">
    <property type="entry name" value="Rhodanese/Cell cycle control phosphatase"/>
    <property type="match status" value="1"/>
</dbReference>
<dbReference type="PROSITE" id="PS50206">
    <property type="entry name" value="RHODANESE_3"/>
    <property type="match status" value="1"/>
</dbReference>
<dbReference type="PROSITE" id="PS00972">
    <property type="entry name" value="USP_1"/>
    <property type="match status" value="1"/>
</dbReference>
<dbReference type="PROSITE" id="PS00973">
    <property type="entry name" value="USP_2"/>
    <property type="match status" value="1"/>
</dbReference>
<dbReference type="PROSITE" id="PS50235">
    <property type="entry name" value="USP_3"/>
    <property type="match status" value="1"/>
</dbReference>
<reference key="1">
    <citation type="journal article" date="2007" name="Proc. Natl. Acad. Sci. U.S.A.">
        <title>Genome sequencing and comparative analysis of Saccharomyces cerevisiae strain YJM789.</title>
        <authorList>
            <person name="Wei W."/>
            <person name="McCusker J.H."/>
            <person name="Hyman R.W."/>
            <person name="Jones T."/>
            <person name="Ning Y."/>
            <person name="Cao Z."/>
            <person name="Gu Z."/>
            <person name="Bruno D."/>
            <person name="Miranda M."/>
            <person name="Nguyen M."/>
            <person name="Wilhelmy J."/>
            <person name="Komp C."/>
            <person name="Tamse R."/>
            <person name="Wang X."/>
            <person name="Jia P."/>
            <person name="Luedi P."/>
            <person name="Oefner P.J."/>
            <person name="David L."/>
            <person name="Dietrich F.S."/>
            <person name="Li Y."/>
            <person name="Davis R.W."/>
            <person name="Steinmetz L.M."/>
        </authorList>
    </citation>
    <scope>NUCLEOTIDE SEQUENCE [LARGE SCALE GENOMIC DNA]</scope>
    <source>
        <strain>YJM789</strain>
    </source>
</reference>
<sequence length="926" mass="105092">MEQNIISTIRDECIRHRSKYLTIAQLTAIAEAKINEFIITGKAKDQDLSSLLDKCIDILSIYKKNSKDIKNIISCKNKGAMISSNSVMIIQLNYVYYKVIHIIVTTNIPHLSEFAKIKLHKSTSDEGNGNNNNNEFQLMNIYNTLLETLLKDENIAKIKSFIKSSIKQTKLNHEQEECNLMRTGSYITSNQLNSLISSSANSTSSQMEILLIDIRSRLEFNKSHIDTKNIICLEPISFKMSYSDHDLEKKSLITSPNSEIKMFQSRNLFKFIILYTDANEYNVKQQSVLLDILVNHSFEKPISDDFTKIFILESGFPGWLKSNYGSQVSSSSPSNNNIKDDSVYINGNTSGLSLQHLPKMSPSIRHSMDDSMKEMLVAPTPLNHLQQQQQQQSDNDHVLKRSSSFKKLFSNYTSPNPKNSNSNLYSISSLSISSSPSPLPLHSPDPVKGNSLPINYPETPHLWKNSETDFMTNQREQLNHNSFAHIAPINTKAITSPSRTATPKLQRFPQTISMNLNMNSNGHSSATSTIQPSCLSLSNNDSLDHTDVTPTSSHNYDLDFAVGLENLGNSCYMNCIIQCILGTHELTQIFLDDSYAKHININSKLGSKGILAKYFARLVHMMYKEQVDGSKKISISPIKFKLACGSVNSLFKTASQQDCQEFCQFLLDGLHEDLNQCGSNPPLKELSQEAEARREKLSLRIASSIEWERFLTTDFSVIVDLFQGQYASRLKCKVCSHTSTTYQPFTVLSIPIPKKNSRNNITIEDCFREFTKCENLEVDEQWLCPHCKKRQPSTKQLTITRLPRNLIVHLKRFDNLLNKNNDFVIYPFLLDLTPFWANDFDGVFPPGVNDDELPIRGQIPPFKYELYGVACHFGTLYGGHYTAYVKKGLKKGWLYFDDTKYKPVKNKADAINSNAYVLFYHRVYGV</sequence>
<gene>
    <name type="primary">DOA4</name>
    <name type="synonym">DOS1</name>
    <name type="synonym">MUT4</name>
    <name type="synonym">NPI2</name>
    <name type="synonym">SSV7</name>
    <name type="synonym">UBP4</name>
    <name type="ORF">SCY_0972</name>
</gene>
<keyword id="KW-0963">Cytoplasm</keyword>
<keyword id="KW-0967">Endosome</keyword>
<keyword id="KW-0378">Hydrolase</keyword>
<keyword id="KW-0472">Membrane</keyword>
<keyword id="KW-0597">Phosphoprotein</keyword>
<keyword id="KW-0645">Protease</keyword>
<keyword id="KW-0788">Thiol protease</keyword>
<keyword id="KW-0833">Ubl conjugation pathway</keyword>
<accession>A6ZY34</accession>
<proteinExistence type="inferred from homology"/>
<comment type="function">
    <text evidence="1">Ubiquitin thioesterase that acts at the late endosome/prevacuolar compartment to recover ubiquitin from ubiquitinated membrane proteins en route to the vacuole. Also removes ubiquitin from soluble proteins targeted to proteasomes. Is essential to maintain a normal level of free ubiquitin. Involved in the ammonium-induced down-regulation of the GAP1 permease and the UME3 destruction in response to oxidative stress. Has a role in the RAD9 checkpoint response to TOP1 poisons. Required for promoting coordination of DNA replication and avoids DNA overreplication (By similarity).</text>
</comment>
<comment type="catalytic activity">
    <reaction>
        <text>Thiol-dependent hydrolysis of ester, thioester, amide, peptide and isopeptide bonds formed by the C-terminal Gly of ubiquitin (a 76-residue protein attached to proteins as an intracellular targeting signal).</text>
        <dbReference type="EC" id="3.4.19.12"/>
    </reaction>
</comment>
<comment type="activity regulation">
    <text evidence="1">RFU1 is an inhibitor of deubiquitination activity.</text>
</comment>
<comment type="subunit">
    <text evidence="1">Interacts with BRO1, RFU1 and VPS32. Associates with the 26S proteasome (By similarity).</text>
</comment>
<comment type="subcellular location">
    <subcellularLocation>
        <location evidence="1">Cytoplasm</location>
    </subcellularLocation>
    <subcellularLocation>
        <location evidence="1">Late endosome membrane</location>
        <topology evidence="1">Peripheral membrane protein</topology>
    </subcellularLocation>
    <text evidence="1">Recruited to the late endosome by BRO1.</text>
</comment>
<comment type="domain">
    <text evidence="1">Residues 1-208 are essential for the localization to the late endosome and constitute a late endosome localization (LEL) domain.</text>
</comment>
<comment type="similarity">
    <text evidence="6">Belongs to the peptidase C19 family.</text>
</comment>
<protein>
    <recommendedName>
        <fullName>Ubiquitin carboxyl-terminal hydrolase 4</fullName>
        <ecNumber>3.4.19.12</ecNumber>
    </recommendedName>
    <alternativeName>
        <fullName>Deubiquitinating enzyme 4</fullName>
    </alternativeName>
    <alternativeName>
        <fullName>Ubiquitin thioesterase 4</fullName>
    </alternativeName>
    <alternativeName>
        <fullName>Ubiquitin-specific-processing protease 4</fullName>
    </alternativeName>
    <alternativeName>
        <fullName>Vacuole biogenesis protein SSV7</fullName>
    </alternativeName>
</protein>
<feature type="chain" id="PRO_0000376823" description="Ubiquitin carboxyl-terminal hydrolase 4">
    <location>
        <begin position="1"/>
        <end position="926"/>
    </location>
</feature>
<feature type="domain" description="Rhodanese" evidence="3">
    <location>
        <begin position="205"/>
        <end position="328"/>
    </location>
</feature>
<feature type="domain" description="USP">
    <location>
        <begin position="562"/>
        <end position="923"/>
    </location>
</feature>
<feature type="active site" description="Nucleophile" evidence="4 5">
    <location>
        <position position="571"/>
    </location>
</feature>
<feature type="active site" description="Proton acceptor" evidence="4 5">
    <location>
        <position position="880"/>
    </location>
</feature>
<feature type="modified residue" description="Phosphoserine" evidence="2">
    <location>
        <position position="443"/>
    </location>
</feature>